<gene>
    <name type="primary">nifH1</name>
</gene>
<protein>
    <recommendedName>
        <fullName>Nitrogenase iron protein 1</fullName>
        <ecNumber>1.18.6.1</ecNumber>
    </recommendedName>
    <alternativeName>
        <fullName>Nitrogenase Fe protein 1</fullName>
    </alternativeName>
    <alternativeName>
        <fullName>Nitrogenase component II</fullName>
    </alternativeName>
    <alternativeName>
        <fullName>Nitrogenase reductase</fullName>
    </alternativeName>
</protein>
<name>NIFH1_METIV</name>
<organism>
    <name type="scientific">Methanobacterium ivanovii</name>
    <dbReference type="NCBI Taxonomy" id="2163"/>
    <lineage>
        <taxon>Archaea</taxon>
        <taxon>Methanobacteriati</taxon>
        <taxon>Methanobacteriota</taxon>
        <taxon>Methanomada group</taxon>
        <taxon>Methanobacteria</taxon>
        <taxon>Methanobacteriales</taxon>
        <taxon>Methanobacteriaceae</taxon>
        <taxon>Methanobacterium</taxon>
    </lineage>
</organism>
<sequence length="275" mass="30363">MVRKIAIYGKGGIGKSTTTQNTASAMAHFHNQRVMIHGCDPKADSTRMILGGKMQTTMMDTLREEGEEACMDLDNVMSTGFKDIKCVESGGPEPGVGCAGRGVITAITIMEHMKVYDDNDFVFFDVLGDVVCGGFAMPIRDGKAEEIYIVASGEMMALYAANNLCKGMVKYAEQSGVRLGGIICNSRNVDGEKELLEEFCKRIGTQMIHFVPRDNIVQKAEFNKRTVVDFDAECSQAHEYSELARKIIENDNFVIPDPMTMDELEEMVVSYGLMD</sequence>
<proteinExistence type="inferred from homology"/>
<evidence type="ECO:0000250" key="1"/>
<evidence type="ECO:0000255" key="2"/>
<evidence type="ECO:0000305" key="3"/>
<feature type="chain" id="PRO_0000139537" description="Nitrogenase iron protein 1">
    <location>
        <begin position="1"/>
        <end position="275"/>
    </location>
</feature>
<feature type="binding site" evidence="2">
    <location>
        <begin position="9"/>
        <end position="16"/>
    </location>
    <ligand>
        <name>ATP</name>
        <dbReference type="ChEBI" id="CHEBI:30616"/>
    </ligand>
</feature>
<feature type="binding site" evidence="1">
    <location>
        <position position="98"/>
    </location>
    <ligand>
        <name>[4Fe-4S] cluster</name>
        <dbReference type="ChEBI" id="CHEBI:49883"/>
        <note>ligand shared between dimeric partners</note>
    </ligand>
</feature>
<feature type="binding site" evidence="1">
    <location>
        <position position="132"/>
    </location>
    <ligand>
        <name>[4Fe-4S] cluster</name>
        <dbReference type="ChEBI" id="CHEBI:49883"/>
        <note>ligand shared between dimeric partners</note>
    </ligand>
</feature>
<feature type="modified residue" description="ADP-ribosylarginine; by dinitrogenase reductase ADP-ribosyltransferase" evidence="1">
    <location>
        <position position="101"/>
    </location>
</feature>
<keyword id="KW-0004">4Fe-4S</keyword>
<keyword id="KW-0013">ADP-ribosylation</keyword>
<keyword id="KW-0067">ATP-binding</keyword>
<keyword id="KW-0408">Iron</keyword>
<keyword id="KW-0411">Iron-sulfur</keyword>
<keyword id="KW-0479">Metal-binding</keyword>
<keyword id="KW-0535">Nitrogen fixation</keyword>
<keyword id="KW-0547">Nucleotide-binding</keyword>
<keyword id="KW-0560">Oxidoreductase</keyword>
<accession>P51602</accession>
<dbReference type="EC" id="1.18.6.1"/>
<dbReference type="EMBL" id="X56071">
    <property type="protein sequence ID" value="CAA39548.1"/>
    <property type="molecule type" value="Genomic_DNA"/>
</dbReference>
<dbReference type="SMR" id="P51602"/>
<dbReference type="GO" id="GO:0051539">
    <property type="term" value="F:4 iron, 4 sulfur cluster binding"/>
    <property type="evidence" value="ECO:0007669"/>
    <property type="project" value="UniProtKB-KW"/>
</dbReference>
<dbReference type="GO" id="GO:0005524">
    <property type="term" value="F:ATP binding"/>
    <property type="evidence" value="ECO:0007669"/>
    <property type="project" value="UniProtKB-UniRule"/>
</dbReference>
<dbReference type="GO" id="GO:0046872">
    <property type="term" value="F:metal ion binding"/>
    <property type="evidence" value="ECO:0007669"/>
    <property type="project" value="UniProtKB-KW"/>
</dbReference>
<dbReference type="GO" id="GO:0016163">
    <property type="term" value="F:nitrogenase activity"/>
    <property type="evidence" value="ECO:0007669"/>
    <property type="project" value="UniProtKB-UniRule"/>
</dbReference>
<dbReference type="GO" id="GO:0009399">
    <property type="term" value="P:nitrogen fixation"/>
    <property type="evidence" value="ECO:0007669"/>
    <property type="project" value="UniProtKB-UniRule"/>
</dbReference>
<dbReference type="CDD" id="cd02040">
    <property type="entry name" value="NifH"/>
    <property type="match status" value="1"/>
</dbReference>
<dbReference type="Gene3D" id="3.40.50.300">
    <property type="entry name" value="P-loop containing nucleotide triphosphate hydrolases"/>
    <property type="match status" value="1"/>
</dbReference>
<dbReference type="HAMAP" id="MF_00533">
    <property type="entry name" value="NifH"/>
    <property type="match status" value="1"/>
</dbReference>
<dbReference type="InterPro" id="IPR030655">
    <property type="entry name" value="NifH/chlL_CS"/>
</dbReference>
<dbReference type="InterPro" id="IPR000392">
    <property type="entry name" value="NifH/frxC"/>
</dbReference>
<dbReference type="InterPro" id="IPR005977">
    <property type="entry name" value="Nitrogenase_Fe_NifH"/>
</dbReference>
<dbReference type="InterPro" id="IPR027417">
    <property type="entry name" value="P-loop_NTPase"/>
</dbReference>
<dbReference type="NCBIfam" id="TIGR01287">
    <property type="entry name" value="nifH"/>
    <property type="match status" value="1"/>
</dbReference>
<dbReference type="PANTHER" id="PTHR42864">
    <property type="entry name" value="LIGHT-INDEPENDENT PROTOCHLOROPHYLLIDE REDUCTASE IRON-SULFUR ATP-BINDING PROTEIN"/>
    <property type="match status" value="1"/>
</dbReference>
<dbReference type="PANTHER" id="PTHR42864:SF2">
    <property type="entry name" value="LIGHT-INDEPENDENT PROTOCHLOROPHYLLIDE REDUCTASE IRON-SULFUR ATP-BINDING PROTEIN"/>
    <property type="match status" value="1"/>
</dbReference>
<dbReference type="Pfam" id="PF00142">
    <property type="entry name" value="Fer4_NifH"/>
    <property type="match status" value="1"/>
</dbReference>
<dbReference type="PIRSF" id="PIRSF000363">
    <property type="entry name" value="Nitrogenase_iron"/>
    <property type="match status" value="1"/>
</dbReference>
<dbReference type="PRINTS" id="PR00091">
    <property type="entry name" value="NITROGNASEII"/>
</dbReference>
<dbReference type="SUPFAM" id="SSF52540">
    <property type="entry name" value="P-loop containing nucleoside triphosphate hydrolases"/>
    <property type="match status" value="1"/>
</dbReference>
<dbReference type="PROSITE" id="PS00746">
    <property type="entry name" value="NIFH_FRXC_1"/>
    <property type="match status" value="1"/>
</dbReference>
<dbReference type="PROSITE" id="PS00692">
    <property type="entry name" value="NIFH_FRXC_2"/>
    <property type="match status" value="1"/>
</dbReference>
<dbReference type="PROSITE" id="PS51026">
    <property type="entry name" value="NIFH_FRXC_3"/>
    <property type="match status" value="1"/>
</dbReference>
<comment type="function">
    <text evidence="1">The key enzymatic reactions in nitrogen fixation are catalyzed by the nitrogenase complex, which has 2 components: the iron protein and the molybdenum-iron protein.</text>
</comment>
<comment type="catalytic activity">
    <reaction>
        <text>N2 + 8 reduced [2Fe-2S]-[ferredoxin] + 16 ATP + 16 H2O = H2 + 8 oxidized [2Fe-2S]-[ferredoxin] + 2 NH4(+) + 16 ADP + 16 phosphate + 6 H(+)</text>
        <dbReference type="Rhea" id="RHEA:21448"/>
        <dbReference type="Rhea" id="RHEA-COMP:10000"/>
        <dbReference type="Rhea" id="RHEA-COMP:10001"/>
        <dbReference type="ChEBI" id="CHEBI:15377"/>
        <dbReference type="ChEBI" id="CHEBI:15378"/>
        <dbReference type="ChEBI" id="CHEBI:17997"/>
        <dbReference type="ChEBI" id="CHEBI:18276"/>
        <dbReference type="ChEBI" id="CHEBI:28938"/>
        <dbReference type="ChEBI" id="CHEBI:30616"/>
        <dbReference type="ChEBI" id="CHEBI:33737"/>
        <dbReference type="ChEBI" id="CHEBI:33738"/>
        <dbReference type="ChEBI" id="CHEBI:43474"/>
        <dbReference type="ChEBI" id="CHEBI:456216"/>
        <dbReference type="EC" id="1.18.6.1"/>
    </reaction>
</comment>
<comment type="cofactor">
    <cofactor evidence="1">
        <name>[4Fe-4S] cluster</name>
        <dbReference type="ChEBI" id="CHEBI:49883"/>
    </cofactor>
    <text evidence="1">Binds 1 [4Fe-4S] cluster per dimer.</text>
</comment>
<comment type="subunit">
    <text evidence="1">Homodimer.</text>
</comment>
<comment type="PTM">
    <text evidence="1">The reversible ADP-ribosylation of Arg-101 inactivates the nitrogenase reductase and regulates nitrogenase activity.</text>
</comment>
<comment type="similarity">
    <text evidence="3">Belongs to the NifH/BchL/ChlL family.</text>
</comment>
<reference key="1">
    <citation type="journal article" date="1991" name="Res. Microbiol.">
        <title>Nucleotide sequence of nifH regions from Methanobacterium ivanovii and Methanosarcina barkeri 227 and characterization of glnB-like genes.</title>
        <authorList>
            <person name="Sibold L."/>
            <person name="Henriquet M."/>
            <person name="Possot O."/>
            <person name="Aubert J.-P."/>
        </authorList>
    </citation>
    <scope>NUCLEOTIDE SEQUENCE [GENOMIC DNA]</scope>
</reference>